<proteinExistence type="inferred from homology"/>
<evidence type="ECO:0000255" key="1">
    <source>
        <dbReference type="HAMAP-Rule" id="MF_00056"/>
    </source>
</evidence>
<gene>
    <name evidence="1" type="primary">kdsA</name>
    <name type="ordered locus">RALTA_A1166</name>
</gene>
<name>KDSA_CUPTR</name>
<comment type="catalytic activity">
    <reaction evidence="1">
        <text>D-arabinose 5-phosphate + phosphoenolpyruvate + H2O = 3-deoxy-alpha-D-manno-2-octulosonate-8-phosphate + phosphate</text>
        <dbReference type="Rhea" id="RHEA:14053"/>
        <dbReference type="ChEBI" id="CHEBI:15377"/>
        <dbReference type="ChEBI" id="CHEBI:43474"/>
        <dbReference type="ChEBI" id="CHEBI:57693"/>
        <dbReference type="ChEBI" id="CHEBI:58702"/>
        <dbReference type="ChEBI" id="CHEBI:85985"/>
        <dbReference type="EC" id="2.5.1.55"/>
    </reaction>
</comment>
<comment type="pathway">
    <text evidence="1">Carbohydrate biosynthesis; 3-deoxy-D-manno-octulosonate biosynthesis; 3-deoxy-D-manno-octulosonate from D-ribulose 5-phosphate: step 2/3.</text>
</comment>
<comment type="pathway">
    <text evidence="1">Bacterial outer membrane biogenesis; lipopolysaccharide biosynthesis.</text>
</comment>
<comment type="subcellular location">
    <subcellularLocation>
        <location evidence="1">Cytoplasm</location>
    </subcellularLocation>
</comment>
<comment type="similarity">
    <text evidence="1">Belongs to the KdsA family.</text>
</comment>
<accession>B3R497</accession>
<dbReference type="EC" id="2.5.1.55" evidence="1"/>
<dbReference type="EMBL" id="CU633749">
    <property type="protein sequence ID" value="CAQ69130.1"/>
    <property type="molecule type" value="Genomic_DNA"/>
</dbReference>
<dbReference type="RefSeq" id="WP_012352458.1">
    <property type="nucleotide sequence ID" value="NC_010528.1"/>
</dbReference>
<dbReference type="SMR" id="B3R497"/>
<dbReference type="GeneID" id="29763078"/>
<dbReference type="KEGG" id="cti:RALTA_A1166"/>
<dbReference type="eggNOG" id="COG2877">
    <property type="taxonomic scope" value="Bacteria"/>
</dbReference>
<dbReference type="HOGENOM" id="CLU_036666_0_0_4"/>
<dbReference type="BioCyc" id="CTAI977880:RALTA_RS05570-MONOMER"/>
<dbReference type="UniPathway" id="UPA00030"/>
<dbReference type="UniPathway" id="UPA00357">
    <property type="reaction ID" value="UER00474"/>
</dbReference>
<dbReference type="Proteomes" id="UP000001692">
    <property type="component" value="Chromosome 1"/>
</dbReference>
<dbReference type="GO" id="GO:0005737">
    <property type="term" value="C:cytoplasm"/>
    <property type="evidence" value="ECO:0007669"/>
    <property type="project" value="UniProtKB-SubCell"/>
</dbReference>
<dbReference type="GO" id="GO:0008676">
    <property type="term" value="F:3-deoxy-8-phosphooctulonate synthase activity"/>
    <property type="evidence" value="ECO:0007669"/>
    <property type="project" value="UniProtKB-UniRule"/>
</dbReference>
<dbReference type="GO" id="GO:0019294">
    <property type="term" value="P:keto-3-deoxy-D-manno-octulosonic acid biosynthetic process"/>
    <property type="evidence" value="ECO:0007669"/>
    <property type="project" value="UniProtKB-UniRule"/>
</dbReference>
<dbReference type="Gene3D" id="3.20.20.70">
    <property type="entry name" value="Aldolase class I"/>
    <property type="match status" value="1"/>
</dbReference>
<dbReference type="HAMAP" id="MF_00056">
    <property type="entry name" value="KDO8P_synth"/>
    <property type="match status" value="1"/>
</dbReference>
<dbReference type="InterPro" id="IPR013785">
    <property type="entry name" value="Aldolase_TIM"/>
</dbReference>
<dbReference type="InterPro" id="IPR006218">
    <property type="entry name" value="DAHP1/KDSA"/>
</dbReference>
<dbReference type="InterPro" id="IPR006269">
    <property type="entry name" value="KDO8P_synthase"/>
</dbReference>
<dbReference type="NCBIfam" id="TIGR01362">
    <property type="entry name" value="KDO8P_synth"/>
    <property type="match status" value="1"/>
</dbReference>
<dbReference type="NCBIfam" id="NF003543">
    <property type="entry name" value="PRK05198.1"/>
    <property type="match status" value="1"/>
</dbReference>
<dbReference type="PANTHER" id="PTHR21057">
    <property type="entry name" value="PHOSPHO-2-DEHYDRO-3-DEOXYHEPTONATE ALDOLASE"/>
    <property type="match status" value="1"/>
</dbReference>
<dbReference type="Pfam" id="PF00793">
    <property type="entry name" value="DAHP_synth_1"/>
    <property type="match status" value="1"/>
</dbReference>
<dbReference type="SUPFAM" id="SSF51569">
    <property type="entry name" value="Aldolase"/>
    <property type="match status" value="1"/>
</dbReference>
<sequence length="289" mass="31111">MKLCGFEVGLDKPFFLIAGPCVIESEQMALDTAGELKAITTELGIPFIYKSSFDKANRSSGKSFRGLGMEKGLEILAHVKREIGVPVLTDIHEIDEIKPVAAVVDVLQTPAFLCRQTDFIRACAQSGKPVNIKKGQFLAPHDMKNVIDKARDAAREAGLPDDVFMACERGVSFGYNNLVSDMRSLAIMRETGAPVVFDATHSVQLPGGQGTSSGGQREFVPVLSRAAVATGVAGLFMETHPDPSKAMSDGPNAVPLSRMKELLTVLKELDTLVKRAGFLEDNFGWPACA</sequence>
<organism>
    <name type="scientific">Cupriavidus taiwanensis (strain DSM 17343 / BCRC 17206 / CCUG 44338 / CIP 107171 / LMG 19424 / R1)</name>
    <name type="common">Ralstonia taiwanensis (strain LMG 19424)</name>
    <dbReference type="NCBI Taxonomy" id="977880"/>
    <lineage>
        <taxon>Bacteria</taxon>
        <taxon>Pseudomonadati</taxon>
        <taxon>Pseudomonadota</taxon>
        <taxon>Betaproteobacteria</taxon>
        <taxon>Burkholderiales</taxon>
        <taxon>Burkholderiaceae</taxon>
        <taxon>Cupriavidus</taxon>
    </lineage>
</organism>
<keyword id="KW-0963">Cytoplasm</keyword>
<keyword id="KW-0448">Lipopolysaccharide biosynthesis</keyword>
<keyword id="KW-0808">Transferase</keyword>
<protein>
    <recommendedName>
        <fullName evidence="1">2-dehydro-3-deoxyphosphooctonate aldolase</fullName>
        <ecNumber evidence="1">2.5.1.55</ecNumber>
    </recommendedName>
    <alternativeName>
        <fullName evidence="1">3-deoxy-D-manno-octulosonic acid 8-phosphate synthase</fullName>
    </alternativeName>
    <alternativeName>
        <fullName evidence="1">KDO-8-phosphate synthase</fullName>
        <shortName evidence="1">KDO 8-P synthase</shortName>
        <shortName evidence="1">KDOPS</shortName>
    </alternativeName>
    <alternativeName>
        <fullName evidence="1">Phospho-2-dehydro-3-deoxyoctonate aldolase</fullName>
    </alternativeName>
</protein>
<feature type="chain" id="PRO_1000091809" description="2-dehydro-3-deoxyphosphooctonate aldolase">
    <location>
        <begin position="1"/>
        <end position="289"/>
    </location>
</feature>
<reference key="1">
    <citation type="journal article" date="2008" name="Genome Res.">
        <title>Genome sequence of the beta-rhizobium Cupriavidus taiwanensis and comparative genomics of rhizobia.</title>
        <authorList>
            <person name="Amadou C."/>
            <person name="Pascal G."/>
            <person name="Mangenot S."/>
            <person name="Glew M."/>
            <person name="Bontemps C."/>
            <person name="Capela D."/>
            <person name="Carrere S."/>
            <person name="Cruveiller S."/>
            <person name="Dossat C."/>
            <person name="Lajus A."/>
            <person name="Marchetti M."/>
            <person name="Poinsot V."/>
            <person name="Rouy Z."/>
            <person name="Servin B."/>
            <person name="Saad M."/>
            <person name="Schenowitz C."/>
            <person name="Barbe V."/>
            <person name="Batut J."/>
            <person name="Medigue C."/>
            <person name="Masson-Boivin C."/>
        </authorList>
    </citation>
    <scope>NUCLEOTIDE SEQUENCE [LARGE SCALE GENOMIC DNA]</scope>
    <source>
        <strain>DSM 17343 / BCRC 17206 / CCUG 44338 / CIP 107171 / LMG 19424 / R1</strain>
    </source>
</reference>